<keyword id="KW-1003">Cell membrane</keyword>
<keyword id="KW-0184">Conjugation</keyword>
<keyword id="KW-0325">Glycoprotein</keyword>
<keyword id="KW-0472">Membrane</keyword>
<keyword id="KW-1185">Reference proteome</keyword>
<keyword id="KW-0812">Transmembrane</keyword>
<keyword id="KW-1133">Transmembrane helix</keyword>
<proteinExistence type="inferred from homology"/>
<sequence>MFYNEKTGAVPPVPSNLNANTWHTVDLQPAPQLQPHAHTAPTVTPYLGLRARLSQLWFNRWTILLILVLVRVLILTAGLNDNIGDAKTKALSACTKVEDIGSAMASMPHYLSVGVNSMAADGITKTVSGMVKMLMMILTGVENLILFIINMYVGTYACLIAALIHGGLDVSVKVVEGATKVMNDAIGTITGQITESISDVQDAINKIPDTISSFLGGVDFDLPKIDITKNLDDLENIKINSNELVRDIVALNKTIPTFDQVENFTKNAIAIPFNFLKEQVNSSFGSYKFDDSVFPVAEKQALSFCSNNSFLNDFFETLFNVVRTAKIAFCVAIPILAVLAIVGMGYLEIQRWRREKQRSREFTERGYDPMDVVYLSSRPVTGGFGLWLSAKFKSVKKQLLVRWTIAYGTSLPALFVLSLAFAGLFSCLCQFIILRSIQKEAPALANQVGDFAGDVVGTLQQVSTNWADDANGVIIKLQDDINDDMFGWVSNATTAVNDTLNTFDDEIDKAITAVFKDTILFNTARNLVGCLITRKIETVQEGLTWVHDNAHVTLPLFANDVFSQGANNSVNGDSDLTSFLASPSSVTTDEITSAVNQVITKLEHGIVQEALISTALLLVYVIVVLSGAVRALVASAQKEKTRGEGGEQYGVKAPGSRGSSSASSGNSDNHHYHHHHDNSAPSDFDRKGVIYAGSVKRGRPGPERWPSHARKSSYPEVEGPDH</sequence>
<reference key="1">
    <citation type="journal article" date="2015" name="Genome Announc.">
        <title>Draft genome sequence of the cellulolytic fungus Chaetomium globosum.</title>
        <authorList>
            <person name="Cuomo C.A."/>
            <person name="Untereiner W.A."/>
            <person name="Ma L.-J."/>
            <person name="Grabherr M."/>
            <person name="Birren B.W."/>
        </authorList>
    </citation>
    <scope>NUCLEOTIDE SEQUENCE [LARGE SCALE GENOMIC DNA]</scope>
    <source>
        <strain>ATCC 6205 / CBS 148.51 / DSM 1962 / NBRC 6347 / NRRL 1970</strain>
    </source>
</reference>
<dbReference type="EMBL" id="CH408035">
    <property type="protein sequence ID" value="EAQ84282.1"/>
    <property type="molecule type" value="Genomic_DNA"/>
</dbReference>
<dbReference type="RefSeq" id="XP_001228613.1">
    <property type="nucleotide sequence ID" value="XM_001228612.1"/>
</dbReference>
<dbReference type="SMR" id="Q2GMW8"/>
<dbReference type="FunCoup" id="Q2GMW8">
    <property type="interactions" value="14"/>
</dbReference>
<dbReference type="STRING" id="306901.Q2GMW8"/>
<dbReference type="GlyCosmos" id="Q2GMW8">
    <property type="glycosylation" value="7 sites, No reported glycans"/>
</dbReference>
<dbReference type="GeneID" id="4396372"/>
<dbReference type="VEuPathDB" id="FungiDB:CHGG_10686"/>
<dbReference type="eggNOG" id="ENOG502QRP5">
    <property type="taxonomic scope" value="Eukaryota"/>
</dbReference>
<dbReference type="HOGENOM" id="CLU_010191_1_0_1"/>
<dbReference type="InParanoid" id="Q2GMW8"/>
<dbReference type="OMA" id="NVFGWVN"/>
<dbReference type="OrthoDB" id="5356111at2759"/>
<dbReference type="Proteomes" id="UP000001056">
    <property type="component" value="Unassembled WGS sequence"/>
</dbReference>
<dbReference type="GO" id="GO:0043332">
    <property type="term" value="C:mating projection tip"/>
    <property type="evidence" value="ECO:0007669"/>
    <property type="project" value="InterPro"/>
</dbReference>
<dbReference type="GO" id="GO:0005886">
    <property type="term" value="C:plasma membrane"/>
    <property type="evidence" value="ECO:0007669"/>
    <property type="project" value="UniProtKB-SubCell"/>
</dbReference>
<dbReference type="GO" id="GO:0032220">
    <property type="term" value="P:plasma membrane fusion involved in cytogamy"/>
    <property type="evidence" value="ECO:0007669"/>
    <property type="project" value="TreeGrafter"/>
</dbReference>
<dbReference type="InterPro" id="IPR026777">
    <property type="entry name" value="PRM1"/>
</dbReference>
<dbReference type="PANTHER" id="PTHR31030">
    <property type="entry name" value="PLASMA MEMBRANE FUSION PROTEIN PRM1"/>
    <property type="match status" value="1"/>
</dbReference>
<dbReference type="PANTHER" id="PTHR31030:SF1">
    <property type="entry name" value="PLASMA MEMBRANE FUSION PROTEIN PRM1"/>
    <property type="match status" value="1"/>
</dbReference>
<gene>
    <name type="primary">PRM1</name>
    <name type="ORF">CHGG_10686</name>
</gene>
<feature type="chain" id="PRO_0000337276" description="Plasma membrane fusion protein PRM1">
    <location>
        <begin position="1"/>
        <end position="722"/>
    </location>
</feature>
<feature type="topological domain" description="Extracellular" evidence="1">
    <location>
        <begin position="1"/>
        <end position="60"/>
    </location>
</feature>
<feature type="transmembrane region" description="Helical" evidence="2">
    <location>
        <begin position="61"/>
        <end position="81"/>
    </location>
</feature>
<feature type="topological domain" description="Cytoplasmic" evidence="1">
    <location>
        <begin position="82"/>
        <end position="143"/>
    </location>
</feature>
<feature type="transmembrane region" description="Helical" evidence="2">
    <location>
        <begin position="144"/>
        <end position="164"/>
    </location>
</feature>
<feature type="topological domain" description="Extracellular" evidence="1">
    <location>
        <begin position="165"/>
        <end position="326"/>
    </location>
</feature>
<feature type="transmembrane region" description="Helical" evidence="2">
    <location>
        <begin position="327"/>
        <end position="347"/>
    </location>
</feature>
<feature type="topological domain" description="Cytoplasmic" evidence="1">
    <location>
        <begin position="348"/>
        <end position="413"/>
    </location>
</feature>
<feature type="transmembrane region" description="Helical" evidence="2">
    <location>
        <begin position="414"/>
        <end position="434"/>
    </location>
</feature>
<feature type="topological domain" description="Extracellular" evidence="1">
    <location>
        <begin position="435"/>
        <end position="604"/>
    </location>
</feature>
<feature type="transmembrane region" description="Helical" evidence="2">
    <location>
        <begin position="605"/>
        <end position="625"/>
    </location>
</feature>
<feature type="topological domain" description="Cytoplasmic" evidence="1">
    <location>
        <begin position="626"/>
        <end position="722"/>
    </location>
</feature>
<feature type="region of interest" description="Disordered" evidence="3">
    <location>
        <begin position="636"/>
        <end position="722"/>
    </location>
</feature>
<feature type="compositionally biased region" description="Low complexity" evidence="3">
    <location>
        <begin position="655"/>
        <end position="667"/>
    </location>
</feature>
<feature type="glycosylation site" description="N-linked (GlcNAc...) asparagine" evidence="2">
    <location>
        <position position="252"/>
    </location>
</feature>
<feature type="glycosylation site" description="N-linked (GlcNAc...) asparagine" evidence="2">
    <location>
        <position position="263"/>
    </location>
</feature>
<feature type="glycosylation site" description="N-linked (GlcNAc...) asparagine" evidence="2">
    <location>
        <position position="281"/>
    </location>
</feature>
<feature type="glycosylation site" description="N-linked (GlcNAc...) asparagine" evidence="2">
    <location>
        <position position="307"/>
    </location>
</feature>
<feature type="glycosylation site" description="N-linked (GlcNAc...) asparagine" evidence="2">
    <location>
        <position position="491"/>
    </location>
</feature>
<feature type="glycosylation site" description="N-linked (GlcNAc...) asparagine" evidence="2">
    <location>
        <position position="497"/>
    </location>
</feature>
<feature type="glycosylation site" description="N-linked (GlcNAc...) asparagine" evidence="2">
    <location>
        <position position="567"/>
    </location>
</feature>
<evidence type="ECO:0000250" key="1"/>
<evidence type="ECO:0000255" key="2"/>
<evidence type="ECO:0000256" key="3">
    <source>
        <dbReference type="SAM" id="MobiDB-lite"/>
    </source>
</evidence>
<evidence type="ECO:0000305" key="4"/>
<organism>
    <name type="scientific">Chaetomium globosum (strain ATCC 6205 / CBS 148.51 / DSM 1962 / NBRC 6347 / NRRL 1970)</name>
    <name type="common">Soil fungus</name>
    <dbReference type="NCBI Taxonomy" id="306901"/>
    <lineage>
        <taxon>Eukaryota</taxon>
        <taxon>Fungi</taxon>
        <taxon>Dikarya</taxon>
        <taxon>Ascomycota</taxon>
        <taxon>Pezizomycotina</taxon>
        <taxon>Sordariomycetes</taxon>
        <taxon>Sordariomycetidae</taxon>
        <taxon>Sordariales</taxon>
        <taxon>Chaetomiaceae</taxon>
        <taxon>Chaetomium</taxon>
    </lineage>
</organism>
<name>PRM1_CHAGB</name>
<comment type="function">
    <text evidence="1">Involved in cell fusion during mating by stabilizing the plasma membrane fusion event.</text>
</comment>
<comment type="subcellular location">
    <subcellularLocation>
        <location evidence="1">Cell membrane</location>
        <topology evidence="1">Multi-pass membrane protein</topology>
    </subcellularLocation>
</comment>
<comment type="similarity">
    <text evidence="4">Belongs to the PRM1 family.</text>
</comment>
<protein>
    <recommendedName>
        <fullName>Plasma membrane fusion protein PRM1</fullName>
    </recommendedName>
</protein>
<accession>Q2GMW8</accession>